<sequence>MKYTRHSKILELIDKNEIETQEELSERLKDMGFTVTQATVSRDIKELRLIKVLTKNGKYKYATLQSQENILSDRVVKIFKNSVVSIDYAGNLIVIKTLTGSAQAAAAAIDAGDMNDVVGTIAGDDTIFIVIRDEKNVPSTIEHFRKLMK</sequence>
<keyword id="KW-0028">Amino-acid biosynthesis</keyword>
<keyword id="KW-0055">Arginine biosynthesis</keyword>
<keyword id="KW-0963">Cytoplasm</keyword>
<keyword id="KW-0238">DNA-binding</keyword>
<keyword id="KW-1185">Reference proteome</keyword>
<keyword id="KW-0678">Repressor</keyword>
<keyword id="KW-0804">Transcription</keyword>
<keyword id="KW-0805">Transcription regulation</keyword>
<proteinExistence type="inferred from homology"/>
<gene>
    <name evidence="1" type="primary">argR</name>
    <name type="ordered locus">Clos_1605</name>
</gene>
<accession>A8MFI5</accession>
<feature type="chain" id="PRO_1000058319" description="Arginine repressor">
    <location>
        <begin position="1"/>
        <end position="149"/>
    </location>
</feature>
<evidence type="ECO:0000255" key="1">
    <source>
        <dbReference type="HAMAP-Rule" id="MF_00173"/>
    </source>
</evidence>
<dbReference type="EMBL" id="CP000853">
    <property type="protein sequence ID" value="ABW19148.1"/>
    <property type="molecule type" value="Genomic_DNA"/>
</dbReference>
<dbReference type="RefSeq" id="WP_012159460.1">
    <property type="nucleotide sequence ID" value="NC_009922.1"/>
</dbReference>
<dbReference type="SMR" id="A8MFI5"/>
<dbReference type="STRING" id="350688.Clos_1605"/>
<dbReference type="KEGG" id="aoe:Clos_1605"/>
<dbReference type="eggNOG" id="COG1438">
    <property type="taxonomic scope" value="Bacteria"/>
</dbReference>
<dbReference type="HOGENOM" id="CLU_097103_3_2_9"/>
<dbReference type="OrthoDB" id="9807089at2"/>
<dbReference type="UniPathway" id="UPA00068"/>
<dbReference type="Proteomes" id="UP000000269">
    <property type="component" value="Chromosome"/>
</dbReference>
<dbReference type="GO" id="GO:0005737">
    <property type="term" value="C:cytoplasm"/>
    <property type="evidence" value="ECO:0007669"/>
    <property type="project" value="UniProtKB-SubCell"/>
</dbReference>
<dbReference type="GO" id="GO:0034618">
    <property type="term" value="F:arginine binding"/>
    <property type="evidence" value="ECO:0007669"/>
    <property type="project" value="InterPro"/>
</dbReference>
<dbReference type="GO" id="GO:0003677">
    <property type="term" value="F:DNA binding"/>
    <property type="evidence" value="ECO:0007669"/>
    <property type="project" value="UniProtKB-KW"/>
</dbReference>
<dbReference type="GO" id="GO:0003700">
    <property type="term" value="F:DNA-binding transcription factor activity"/>
    <property type="evidence" value="ECO:0007669"/>
    <property type="project" value="UniProtKB-UniRule"/>
</dbReference>
<dbReference type="GO" id="GO:0006526">
    <property type="term" value="P:L-arginine biosynthetic process"/>
    <property type="evidence" value="ECO:0007669"/>
    <property type="project" value="UniProtKB-UniPathway"/>
</dbReference>
<dbReference type="GO" id="GO:0051259">
    <property type="term" value="P:protein complex oligomerization"/>
    <property type="evidence" value="ECO:0007669"/>
    <property type="project" value="InterPro"/>
</dbReference>
<dbReference type="GO" id="GO:1900079">
    <property type="term" value="P:regulation of arginine biosynthetic process"/>
    <property type="evidence" value="ECO:0007669"/>
    <property type="project" value="UniProtKB-UniRule"/>
</dbReference>
<dbReference type="Gene3D" id="3.30.1360.40">
    <property type="match status" value="1"/>
</dbReference>
<dbReference type="Gene3D" id="1.10.10.10">
    <property type="entry name" value="Winged helix-like DNA-binding domain superfamily/Winged helix DNA-binding domain"/>
    <property type="match status" value="1"/>
</dbReference>
<dbReference type="HAMAP" id="MF_00173">
    <property type="entry name" value="Arg_repressor"/>
    <property type="match status" value="1"/>
</dbReference>
<dbReference type="InterPro" id="IPR001669">
    <property type="entry name" value="Arg_repress"/>
</dbReference>
<dbReference type="InterPro" id="IPR020899">
    <property type="entry name" value="Arg_repress_C"/>
</dbReference>
<dbReference type="InterPro" id="IPR036251">
    <property type="entry name" value="Arg_repress_C_sf"/>
</dbReference>
<dbReference type="InterPro" id="IPR020900">
    <property type="entry name" value="Arg_repress_DNA-bd"/>
</dbReference>
<dbReference type="InterPro" id="IPR036388">
    <property type="entry name" value="WH-like_DNA-bd_sf"/>
</dbReference>
<dbReference type="InterPro" id="IPR036390">
    <property type="entry name" value="WH_DNA-bd_sf"/>
</dbReference>
<dbReference type="NCBIfam" id="TIGR01529">
    <property type="entry name" value="argR_whole"/>
    <property type="match status" value="1"/>
</dbReference>
<dbReference type="NCBIfam" id="NF001680">
    <property type="entry name" value="PRK00441.1"/>
    <property type="match status" value="1"/>
</dbReference>
<dbReference type="PANTHER" id="PTHR34471">
    <property type="entry name" value="ARGININE REPRESSOR"/>
    <property type="match status" value="1"/>
</dbReference>
<dbReference type="PANTHER" id="PTHR34471:SF1">
    <property type="entry name" value="ARGININE REPRESSOR"/>
    <property type="match status" value="1"/>
</dbReference>
<dbReference type="Pfam" id="PF01316">
    <property type="entry name" value="Arg_repressor"/>
    <property type="match status" value="1"/>
</dbReference>
<dbReference type="Pfam" id="PF02863">
    <property type="entry name" value="Arg_repressor_C"/>
    <property type="match status" value="1"/>
</dbReference>
<dbReference type="PRINTS" id="PR01467">
    <property type="entry name" value="ARGREPRESSOR"/>
</dbReference>
<dbReference type="SUPFAM" id="SSF55252">
    <property type="entry name" value="C-terminal domain of arginine repressor"/>
    <property type="match status" value="1"/>
</dbReference>
<dbReference type="SUPFAM" id="SSF46785">
    <property type="entry name" value="Winged helix' DNA-binding domain"/>
    <property type="match status" value="1"/>
</dbReference>
<name>ARGR_ALKOO</name>
<reference key="1">
    <citation type="submission" date="2007-10" db="EMBL/GenBank/DDBJ databases">
        <title>Complete genome of Alkaliphilus oremlandii OhILAs.</title>
        <authorList>
            <person name="Copeland A."/>
            <person name="Lucas S."/>
            <person name="Lapidus A."/>
            <person name="Barry K."/>
            <person name="Detter J.C."/>
            <person name="Glavina del Rio T."/>
            <person name="Hammon N."/>
            <person name="Israni S."/>
            <person name="Dalin E."/>
            <person name="Tice H."/>
            <person name="Pitluck S."/>
            <person name="Chain P."/>
            <person name="Malfatti S."/>
            <person name="Shin M."/>
            <person name="Vergez L."/>
            <person name="Schmutz J."/>
            <person name="Larimer F."/>
            <person name="Land M."/>
            <person name="Hauser L."/>
            <person name="Kyrpides N."/>
            <person name="Mikhailova N."/>
            <person name="Stolz J.F."/>
            <person name="Dawson A."/>
            <person name="Fisher E."/>
            <person name="Crable B."/>
            <person name="Perera E."/>
            <person name="Lisak J."/>
            <person name="Ranganathan M."/>
            <person name="Basu P."/>
            <person name="Richardson P."/>
        </authorList>
    </citation>
    <scope>NUCLEOTIDE SEQUENCE [LARGE SCALE GENOMIC DNA]</scope>
    <source>
        <strain>OhILAs</strain>
    </source>
</reference>
<protein>
    <recommendedName>
        <fullName evidence="1">Arginine repressor</fullName>
    </recommendedName>
</protein>
<organism>
    <name type="scientific">Alkaliphilus oremlandii (strain OhILAs)</name>
    <name type="common">Clostridium oremlandii (strain OhILAs)</name>
    <dbReference type="NCBI Taxonomy" id="350688"/>
    <lineage>
        <taxon>Bacteria</taxon>
        <taxon>Bacillati</taxon>
        <taxon>Bacillota</taxon>
        <taxon>Clostridia</taxon>
        <taxon>Peptostreptococcales</taxon>
        <taxon>Natronincolaceae</taxon>
        <taxon>Alkaliphilus</taxon>
    </lineage>
</organism>
<comment type="function">
    <text evidence="1">Regulates arginine biosynthesis genes.</text>
</comment>
<comment type="pathway">
    <text>Amino-acid biosynthesis; L-arginine biosynthesis [regulation].</text>
</comment>
<comment type="subcellular location">
    <subcellularLocation>
        <location evidence="1">Cytoplasm</location>
    </subcellularLocation>
</comment>
<comment type="similarity">
    <text evidence="1">Belongs to the ArgR family.</text>
</comment>